<feature type="chain" id="PRO_1000009148" description="Hydroxylamine reductase">
    <location>
        <begin position="1"/>
        <end position="570"/>
    </location>
</feature>
<feature type="binding site" evidence="1">
    <location>
        <position position="5"/>
    </location>
    <ligand>
        <name>[4Fe-4S] cluster</name>
        <dbReference type="ChEBI" id="CHEBI:49883"/>
    </ligand>
</feature>
<feature type="binding site" evidence="1">
    <location>
        <position position="8"/>
    </location>
    <ligand>
        <name>[4Fe-4S] cluster</name>
        <dbReference type="ChEBI" id="CHEBI:49883"/>
    </ligand>
</feature>
<feature type="binding site" evidence="1">
    <location>
        <position position="17"/>
    </location>
    <ligand>
        <name>[4Fe-4S] cluster</name>
        <dbReference type="ChEBI" id="CHEBI:49883"/>
    </ligand>
</feature>
<feature type="binding site" evidence="1">
    <location>
        <position position="23"/>
    </location>
    <ligand>
        <name>[4Fe-4S] cluster</name>
        <dbReference type="ChEBI" id="CHEBI:49883"/>
    </ligand>
</feature>
<feature type="binding site" evidence="1">
    <location>
        <position position="266"/>
    </location>
    <ligand>
        <name>hybrid [4Fe-2O-2S] cluster</name>
        <dbReference type="ChEBI" id="CHEBI:60519"/>
    </ligand>
</feature>
<feature type="binding site" evidence="1">
    <location>
        <position position="290"/>
    </location>
    <ligand>
        <name>hybrid [4Fe-2O-2S] cluster</name>
        <dbReference type="ChEBI" id="CHEBI:60519"/>
    </ligand>
</feature>
<feature type="binding site" evidence="1">
    <location>
        <position position="334"/>
    </location>
    <ligand>
        <name>hybrid [4Fe-2O-2S] cluster</name>
        <dbReference type="ChEBI" id="CHEBI:60519"/>
    </ligand>
</feature>
<feature type="binding site" description="via persulfide group" evidence="1">
    <location>
        <position position="425"/>
    </location>
    <ligand>
        <name>hybrid [4Fe-2O-2S] cluster</name>
        <dbReference type="ChEBI" id="CHEBI:60519"/>
    </ligand>
</feature>
<feature type="binding site" evidence="1">
    <location>
        <position position="453"/>
    </location>
    <ligand>
        <name>hybrid [4Fe-2O-2S] cluster</name>
        <dbReference type="ChEBI" id="CHEBI:60519"/>
    </ligand>
</feature>
<feature type="binding site" evidence="1">
    <location>
        <position position="478"/>
    </location>
    <ligand>
        <name>hybrid [4Fe-2O-2S] cluster</name>
        <dbReference type="ChEBI" id="CHEBI:60519"/>
    </ligand>
</feature>
<feature type="binding site" evidence="1">
    <location>
        <position position="513"/>
    </location>
    <ligand>
        <name>hybrid [4Fe-2O-2S] cluster</name>
        <dbReference type="ChEBI" id="CHEBI:60519"/>
    </ligand>
</feature>
<feature type="binding site" evidence="1">
    <location>
        <position position="515"/>
    </location>
    <ligand>
        <name>hybrid [4Fe-2O-2S] cluster</name>
        <dbReference type="ChEBI" id="CHEBI:60519"/>
    </ligand>
</feature>
<feature type="modified residue" description="Cysteine persulfide" evidence="1">
    <location>
        <position position="425"/>
    </location>
</feature>
<gene>
    <name evidence="1" type="primary">hcp</name>
    <name type="ordered locus">CLB_2735</name>
</gene>
<protein>
    <recommendedName>
        <fullName evidence="1">Hydroxylamine reductase</fullName>
        <ecNumber evidence="1">1.7.99.1</ecNumber>
    </recommendedName>
    <alternativeName>
        <fullName evidence="1">Hybrid-cluster protein</fullName>
        <shortName evidence="1">HCP</shortName>
    </alternativeName>
    <alternativeName>
        <fullName evidence="1">Prismane protein</fullName>
    </alternativeName>
</protein>
<reference key="1">
    <citation type="journal article" date="2007" name="PLoS ONE">
        <title>Analysis of the neurotoxin complex genes in Clostridium botulinum A1-A4 and B1 strains: BoNT/A3, /Ba4 and /B1 clusters are located within plasmids.</title>
        <authorList>
            <person name="Smith T.J."/>
            <person name="Hill K.K."/>
            <person name="Foley B.T."/>
            <person name="Detter J.C."/>
            <person name="Munk A.C."/>
            <person name="Bruce D.C."/>
            <person name="Doggett N.A."/>
            <person name="Smith L.A."/>
            <person name="Marks J.D."/>
            <person name="Xie G."/>
            <person name="Brettin T.S."/>
        </authorList>
    </citation>
    <scope>NUCLEOTIDE SEQUENCE [LARGE SCALE GENOMIC DNA]</scope>
    <source>
        <strain>ATCC 19397 / Type A</strain>
    </source>
</reference>
<evidence type="ECO:0000255" key="1">
    <source>
        <dbReference type="HAMAP-Rule" id="MF_00069"/>
    </source>
</evidence>
<keyword id="KW-0004">4Fe-4S</keyword>
<keyword id="KW-0963">Cytoplasm</keyword>
<keyword id="KW-0408">Iron</keyword>
<keyword id="KW-0411">Iron-sulfur</keyword>
<keyword id="KW-0479">Metal-binding</keyword>
<keyword id="KW-0560">Oxidoreductase</keyword>
<name>HCP_CLOB1</name>
<accession>A7FX38</accession>
<comment type="function">
    <text evidence="1">Catalyzes the reduction of hydroxylamine to form NH(3) and H(2)O.</text>
</comment>
<comment type="catalytic activity">
    <reaction evidence="1">
        <text>A + NH4(+) + H2O = hydroxylamine + AH2 + H(+)</text>
        <dbReference type="Rhea" id="RHEA:22052"/>
        <dbReference type="ChEBI" id="CHEBI:13193"/>
        <dbReference type="ChEBI" id="CHEBI:15377"/>
        <dbReference type="ChEBI" id="CHEBI:15378"/>
        <dbReference type="ChEBI" id="CHEBI:15429"/>
        <dbReference type="ChEBI" id="CHEBI:17499"/>
        <dbReference type="ChEBI" id="CHEBI:28938"/>
        <dbReference type="EC" id="1.7.99.1"/>
    </reaction>
</comment>
<comment type="cofactor">
    <cofactor evidence="1">
        <name>[4Fe-4S] cluster</name>
        <dbReference type="ChEBI" id="CHEBI:49883"/>
    </cofactor>
    <text evidence="1">Binds 1 [4Fe-4S] cluster.</text>
</comment>
<comment type="cofactor">
    <cofactor evidence="1">
        <name>hybrid [4Fe-2O-2S] cluster</name>
        <dbReference type="ChEBI" id="CHEBI:60519"/>
    </cofactor>
    <text evidence="1">Binds 1 hybrid [4Fe-2O-2S] cluster.</text>
</comment>
<comment type="subcellular location">
    <subcellularLocation>
        <location evidence="1">Cytoplasm</location>
    </subcellularLocation>
</comment>
<comment type="similarity">
    <text evidence="1">Belongs to the HCP family.</text>
</comment>
<sequence length="570" mass="62802">MSMFCYQCQEAAGGRGCTVKGVCGKTEDIAKTQDLIIYVVKGIAIYSSQVREIGLNTSEADKFIVESLFSTITNANFDAKALNARVQEGLKIRQSLKDAIIKAGGSYNSKENKSWTSKFLSVLGIKNDKDEKEIHDAAAWAANNPEDFKKKAETVGILATENEDIRSLRELLTYGLKGMAAYLEHANNLGYDEDSIHAFMEKALVATLDDTLSADELTALVLECGKYGVDVMALLDKANTSTYGNPEITKVNIGVRNNPGILISGHDLKDMEELLKQTEGTGVDVYTHSEMLPANYYPAFKKYKHFVGNYGNAWWKQNEEFEAFNGPILMTTNCIVTPKASYKDRMYTTGVTGFEGVKHINASKDGKKDFSEIIEHAKRCSSPKEIEKGEIIGGFAHNQVLALAPQVVDAVKTGAIKRFFVMAGCDGRMKSRNYYTDFAKALPKDTVILTAGCAKYKYNKLDLGDINGIPRVLDAGQCNDSYSLAVIALKLKEVFELEDINELPISYNIAWYEQKAVIVLLALLHLGVKNIHLGPTLPAFLSPNVAKILVENFGIGTISSVDKDIKMFMN</sequence>
<organism>
    <name type="scientific">Clostridium botulinum (strain ATCC 19397 / Type A)</name>
    <dbReference type="NCBI Taxonomy" id="441770"/>
    <lineage>
        <taxon>Bacteria</taxon>
        <taxon>Bacillati</taxon>
        <taxon>Bacillota</taxon>
        <taxon>Clostridia</taxon>
        <taxon>Eubacteriales</taxon>
        <taxon>Clostridiaceae</taxon>
        <taxon>Clostridium</taxon>
    </lineage>
</organism>
<dbReference type="EC" id="1.7.99.1" evidence="1"/>
<dbReference type="EMBL" id="CP000726">
    <property type="protein sequence ID" value="ABS33065.1"/>
    <property type="molecule type" value="Genomic_DNA"/>
</dbReference>
<dbReference type="RefSeq" id="WP_012047923.1">
    <property type="nucleotide sequence ID" value="NC_009697.1"/>
</dbReference>
<dbReference type="SMR" id="A7FX38"/>
<dbReference type="GeneID" id="5184840"/>
<dbReference type="KEGG" id="cba:CLB_2735"/>
<dbReference type="HOGENOM" id="CLU_038344_2_0_9"/>
<dbReference type="GO" id="GO:0005737">
    <property type="term" value="C:cytoplasm"/>
    <property type="evidence" value="ECO:0007669"/>
    <property type="project" value="UniProtKB-SubCell"/>
</dbReference>
<dbReference type="GO" id="GO:0051539">
    <property type="term" value="F:4 iron, 4 sulfur cluster binding"/>
    <property type="evidence" value="ECO:0007669"/>
    <property type="project" value="UniProtKB-KW"/>
</dbReference>
<dbReference type="GO" id="GO:0050418">
    <property type="term" value="F:hydroxylamine reductase activity"/>
    <property type="evidence" value="ECO:0007669"/>
    <property type="project" value="UniProtKB-UniRule"/>
</dbReference>
<dbReference type="GO" id="GO:0046872">
    <property type="term" value="F:metal ion binding"/>
    <property type="evidence" value="ECO:0007669"/>
    <property type="project" value="UniProtKB-KW"/>
</dbReference>
<dbReference type="GO" id="GO:0004601">
    <property type="term" value="F:peroxidase activity"/>
    <property type="evidence" value="ECO:0007669"/>
    <property type="project" value="TreeGrafter"/>
</dbReference>
<dbReference type="GO" id="GO:0042542">
    <property type="term" value="P:response to hydrogen peroxide"/>
    <property type="evidence" value="ECO:0007669"/>
    <property type="project" value="TreeGrafter"/>
</dbReference>
<dbReference type="CDD" id="cd01914">
    <property type="entry name" value="HCP"/>
    <property type="match status" value="1"/>
</dbReference>
<dbReference type="FunFam" id="1.20.1270.20:FF:000001">
    <property type="entry name" value="Hydroxylamine reductase"/>
    <property type="match status" value="1"/>
</dbReference>
<dbReference type="FunFam" id="1.20.1270.20:FF:000003">
    <property type="entry name" value="Hydroxylamine reductase"/>
    <property type="match status" value="1"/>
</dbReference>
<dbReference type="FunFam" id="3.40.50.2030:FF:000001">
    <property type="entry name" value="Hydroxylamine reductase"/>
    <property type="match status" value="1"/>
</dbReference>
<dbReference type="FunFam" id="3.40.50.2030:FF:000002">
    <property type="entry name" value="Hydroxylamine reductase"/>
    <property type="match status" value="1"/>
</dbReference>
<dbReference type="Gene3D" id="1.20.1270.20">
    <property type="match status" value="2"/>
</dbReference>
<dbReference type="Gene3D" id="3.40.50.2030">
    <property type="match status" value="2"/>
</dbReference>
<dbReference type="HAMAP" id="MF_00069">
    <property type="entry name" value="Hydroxylam_reduct"/>
    <property type="match status" value="1"/>
</dbReference>
<dbReference type="InterPro" id="IPR004137">
    <property type="entry name" value="HCP/CODH"/>
</dbReference>
<dbReference type="InterPro" id="IPR010048">
    <property type="entry name" value="Hydroxylam_reduct"/>
</dbReference>
<dbReference type="InterPro" id="IPR016099">
    <property type="entry name" value="Prismane-like_a/b-sand"/>
</dbReference>
<dbReference type="InterPro" id="IPR011254">
    <property type="entry name" value="Prismane-like_sf"/>
</dbReference>
<dbReference type="InterPro" id="IPR016100">
    <property type="entry name" value="Prismane_a-bundle"/>
</dbReference>
<dbReference type="NCBIfam" id="TIGR01703">
    <property type="entry name" value="hybrid_clust"/>
    <property type="match status" value="1"/>
</dbReference>
<dbReference type="NCBIfam" id="NF003658">
    <property type="entry name" value="PRK05290.1"/>
    <property type="match status" value="1"/>
</dbReference>
<dbReference type="PANTHER" id="PTHR30109">
    <property type="entry name" value="HYDROXYLAMINE REDUCTASE"/>
    <property type="match status" value="1"/>
</dbReference>
<dbReference type="PANTHER" id="PTHR30109:SF0">
    <property type="entry name" value="HYDROXYLAMINE REDUCTASE"/>
    <property type="match status" value="1"/>
</dbReference>
<dbReference type="Pfam" id="PF03063">
    <property type="entry name" value="Prismane"/>
    <property type="match status" value="1"/>
</dbReference>
<dbReference type="PIRSF" id="PIRSF000076">
    <property type="entry name" value="HCP"/>
    <property type="match status" value="1"/>
</dbReference>
<dbReference type="SUPFAM" id="SSF56821">
    <property type="entry name" value="Prismane protein-like"/>
    <property type="match status" value="1"/>
</dbReference>
<proteinExistence type="inferred from homology"/>